<geneLocation type="mitochondrion"/>
<gene>
    <name type="primary">MT-CYB</name>
    <name type="synonym">COB</name>
    <name type="synonym">CYTB</name>
    <name type="synonym">MTCYB</name>
</gene>
<feature type="chain" id="PRO_0000061275" description="Cytochrome b">
    <location>
        <begin position="1"/>
        <end position="381"/>
    </location>
</feature>
<feature type="transmembrane region" description="Helical" evidence="2">
    <location>
        <begin position="33"/>
        <end position="53"/>
    </location>
</feature>
<feature type="transmembrane region" description="Helical" evidence="2">
    <location>
        <begin position="77"/>
        <end position="98"/>
    </location>
</feature>
<feature type="transmembrane region" description="Helical" evidence="2">
    <location>
        <begin position="113"/>
        <end position="133"/>
    </location>
</feature>
<feature type="transmembrane region" description="Helical" evidence="2">
    <location>
        <begin position="178"/>
        <end position="198"/>
    </location>
</feature>
<feature type="transmembrane region" description="Helical" evidence="2">
    <location>
        <begin position="226"/>
        <end position="246"/>
    </location>
</feature>
<feature type="transmembrane region" description="Helical" evidence="2">
    <location>
        <begin position="288"/>
        <end position="308"/>
    </location>
</feature>
<feature type="transmembrane region" description="Helical" evidence="2">
    <location>
        <begin position="320"/>
        <end position="340"/>
    </location>
</feature>
<feature type="transmembrane region" description="Helical" evidence="2">
    <location>
        <begin position="347"/>
        <end position="367"/>
    </location>
</feature>
<feature type="binding site" description="axial binding residue" evidence="2">
    <location>
        <position position="83"/>
    </location>
    <ligand>
        <name>heme b</name>
        <dbReference type="ChEBI" id="CHEBI:60344"/>
        <label>b562</label>
    </ligand>
    <ligandPart>
        <name>Fe</name>
        <dbReference type="ChEBI" id="CHEBI:18248"/>
    </ligandPart>
</feature>
<feature type="binding site" description="axial binding residue" evidence="2">
    <location>
        <position position="97"/>
    </location>
    <ligand>
        <name>heme b</name>
        <dbReference type="ChEBI" id="CHEBI:60344"/>
        <label>b566</label>
    </ligand>
    <ligandPart>
        <name>Fe</name>
        <dbReference type="ChEBI" id="CHEBI:18248"/>
    </ligandPart>
</feature>
<feature type="binding site" description="axial binding residue" evidence="2">
    <location>
        <position position="182"/>
    </location>
    <ligand>
        <name>heme b</name>
        <dbReference type="ChEBI" id="CHEBI:60344"/>
        <label>b562</label>
    </ligand>
    <ligandPart>
        <name>Fe</name>
        <dbReference type="ChEBI" id="CHEBI:18248"/>
    </ligandPart>
</feature>
<feature type="binding site" description="axial binding residue" evidence="2">
    <location>
        <position position="196"/>
    </location>
    <ligand>
        <name>heme b</name>
        <dbReference type="ChEBI" id="CHEBI:60344"/>
        <label>b566</label>
    </ligand>
    <ligandPart>
        <name>Fe</name>
        <dbReference type="ChEBI" id="CHEBI:18248"/>
    </ligandPart>
</feature>
<feature type="binding site" evidence="2">
    <location>
        <position position="201"/>
    </location>
    <ligand>
        <name>a ubiquinone</name>
        <dbReference type="ChEBI" id="CHEBI:16389"/>
    </ligand>
</feature>
<accession>Q35172</accession>
<dbReference type="EMBL" id="U07586">
    <property type="protein sequence ID" value="AAB88762.1"/>
    <property type="molecule type" value="Genomic_DNA"/>
</dbReference>
<dbReference type="SMR" id="Q35172"/>
<dbReference type="GO" id="GO:0005743">
    <property type="term" value="C:mitochondrial inner membrane"/>
    <property type="evidence" value="ECO:0007669"/>
    <property type="project" value="UniProtKB-SubCell"/>
</dbReference>
<dbReference type="GO" id="GO:0045275">
    <property type="term" value="C:respiratory chain complex III"/>
    <property type="evidence" value="ECO:0007669"/>
    <property type="project" value="InterPro"/>
</dbReference>
<dbReference type="GO" id="GO:0046872">
    <property type="term" value="F:metal ion binding"/>
    <property type="evidence" value="ECO:0007669"/>
    <property type="project" value="UniProtKB-KW"/>
</dbReference>
<dbReference type="GO" id="GO:0008121">
    <property type="term" value="F:ubiquinol-cytochrome-c reductase activity"/>
    <property type="evidence" value="ECO:0007669"/>
    <property type="project" value="InterPro"/>
</dbReference>
<dbReference type="GO" id="GO:0006122">
    <property type="term" value="P:mitochondrial electron transport, ubiquinol to cytochrome c"/>
    <property type="evidence" value="ECO:0007669"/>
    <property type="project" value="TreeGrafter"/>
</dbReference>
<dbReference type="CDD" id="cd00290">
    <property type="entry name" value="cytochrome_b_C"/>
    <property type="match status" value="1"/>
</dbReference>
<dbReference type="CDD" id="cd00284">
    <property type="entry name" value="Cytochrome_b_N"/>
    <property type="match status" value="1"/>
</dbReference>
<dbReference type="FunFam" id="1.20.810.10:FF:000002">
    <property type="entry name" value="Cytochrome b"/>
    <property type="match status" value="1"/>
</dbReference>
<dbReference type="Gene3D" id="1.20.810.10">
    <property type="entry name" value="Cytochrome Bc1 Complex, Chain C"/>
    <property type="match status" value="1"/>
</dbReference>
<dbReference type="InterPro" id="IPR005798">
    <property type="entry name" value="Cyt_b/b6_C"/>
</dbReference>
<dbReference type="InterPro" id="IPR036150">
    <property type="entry name" value="Cyt_b/b6_C_sf"/>
</dbReference>
<dbReference type="InterPro" id="IPR005797">
    <property type="entry name" value="Cyt_b/b6_N"/>
</dbReference>
<dbReference type="InterPro" id="IPR027387">
    <property type="entry name" value="Cytb/b6-like_sf"/>
</dbReference>
<dbReference type="InterPro" id="IPR030689">
    <property type="entry name" value="Cytochrome_b"/>
</dbReference>
<dbReference type="InterPro" id="IPR048260">
    <property type="entry name" value="Cytochrome_b_C_euk/bac"/>
</dbReference>
<dbReference type="InterPro" id="IPR048259">
    <property type="entry name" value="Cytochrome_b_N_euk/bac"/>
</dbReference>
<dbReference type="InterPro" id="IPR016174">
    <property type="entry name" value="Di-haem_cyt_TM"/>
</dbReference>
<dbReference type="PANTHER" id="PTHR19271">
    <property type="entry name" value="CYTOCHROME B"/>
    <property type="match status" value="1"/>
</dbReference>
<dbReference type="PANTHER" id="PTHR19271:SF16">
    <property type="entry name" value="CYTOCHROME B"/>
    <property type="match status" value="1"/>
</dbReference>
<dbReference type="Pfam" id="PF00032">
    <property type="entry name" value="Cytochrom_B_C"/>
    <property type="match status" value="1"/>
</dbReference>
<dbReference type="Pfam" id="PF00033">
    <property type="entry name" value="Cytochrome_B"/>
    <property type="match status" value="1"/>
</dbReference>
<dbReference type="PIRSF" id="PIRSF038885">
    <property type="entry name" value="COB"/>
    <property type="match status" value="1"/>
</dbReference>
<dbReference type="SUPFAM" id="SSF81648">
    <property type="entry name" value="a domain/subunit of cytochrome bc1 complex (Ubiquinol-cytochrome c reductase)"/>
    <property type="match status" value="1"/>
</dbReference>
<dbReference type="SUPFAM" id="SSF81342">
    <property type="entry name" value="Transmembrane di-heme cytochromes"/>
    <property type="match status" value="1"/>
</dbReference>
<dbReference type="PROSITE" id="PS51003">
    <property type="entry name" value="CYTB_CTER"/>
    <property type="match status" value="1"/>
</dbReference>
<dbReference type="PROSITE" id="PS51002">
    <property type="entry name" value="CYTB_NTER"/>
    <property type="match status" value="1"/>
</dbReference>
<sequence length="381" mass="43006">MTNLRKTHPLMKIINHSFIDLPAPSNISAWWNFGSLLGICLMIQILTGLFLAMHYTSDTLTAFSSVAHICRDVNYGWLIRNLHANGASMFFMCLFLHVGRGIYYGSYLYKETWNIGVILLLTVMATAFVGYVLPWGQMSFWGATVITNLLSAIPYIGTTLAEWIWGGFSVDKATLTRFFAFHFILPFIIMALVIVHLLFLHETGSNNPSGINPDSDKIPFHPYYTIKDALGLMFLLLVLLTLALFSPDSLGDPDNFSPANPLNTPPHIKSEWYFLFAYAILRSIPNKLGGVLALLASILILLIIPFLHTANQRSMMFRPISQTLFWILTANLMTLTWIGGQPVEQPFIIIGQLASMLYFMLILVLMPLAPLFENYMLKPKW</sequence>
<comment type="function">
    <text evidence="2">Component of the ubiquinol-cytochrome c reductase complex (complex III or cytochrome b-c1 complex) that is part of the mitochondrial respiratory chain. The b-c1 complex mediates electron transfer from ubiquinol to cytochrome c. Contributes to the generation of a proton gradient across the mitochondrial membrane that is then used for ATP synthesis.</text>
</comment>
<comment type="cofactor">
    <cofactor evidence="2">
        <name>heme b</name>
        <dbReference type="ChEBI" id="CHEBI:60344"/>
    </cofactor>
    <text evidence="2">Binds 2 heme b groups non-covalently.</text>
</comment>
<comment type="subunit">
    <text evidence="2">The cytochrome bc1 complex contains 11 subunits: 3 respiratory subunits (MT-CYB, CYC1 and UQCRFS1), 2 core proteins (UQCRC1 and UQCRC2) and 6 low-molecular weight proteins (UQCRH/QCR6, UQCRB/QCR7, UQCRQ/QCR8, UQCR10/QCR9, UQCR11/QCR10 and a cleavage product of UQCRFS1). This cytochrome bc1 complex then forms a dimer.</text>
</comment>
<comment type="subcellular location">
    <subcellularLocation>
        <location evidence="2">Mitochondrion inner membrane</location>
        <topology evidence="2">Multi-pass membrane protein</topology>
    </subcellularLocation>
</comment>
<comment type="miscellaneous">
    <text evidence="1">Heme 1 (or BL or b562) is low-potential and absorbs at about 562 nm, and heme 2 (or BH or b566) is high-potential and absorbs at about 566 nm.</text>
</comment>
<comment type="similarity">
    <text evidence="3 4">Belongs to the cytochrome b family.</text>
</comment>
<comment type="caution">
    <text evidence="2">The full-length protein contains only eight transmembrane helices, not nine as predicted by bioinformatics tools.</text>
</comment>
<name>CYB_NINRI</name>
<keyword id="KW-0249">Electron transport</keyword>
<keyword id="KW-0349">Heme</keyword>
<keyword id="KW-0408">Iron</keyword>
<keyword id="KW-0472">Membrane</keyword>
<keyword id="KW-0479">Metal-binding</keyword>
<keyword id="KW-0496">Mitochondrion</keyword>
<keyword id="KW-0999">Mitochondrion inner membrane</keyword>
<keyword id="KW-0679">Respiratory chain</keyword>
<keyword id="KW-0812">Transmembrane</keyword>
<keyword id="KW-1133">Transmembrane helix</keyword>
<keyword id="KW-0813">Transport</keyword>
<keyword id="KW-0830">Ubiquinone</keyword>
<evidence type="ECO:0000250" key="1"/>
<evidence type="ECO:0000250" key="2">
    <source>
        <dbReference type="UniProtKB" id="P00157"/>
    </source>
</evidence>
<evidence type="ECO:0000255" key="3">
    <source>
        <dbReference type="PROSITE-ProRule" id="PRU00967"/>
    </source>
</evidence>
<evidence type="ECO:0000255" key="4">
    <source>
        <dbReference type="PROSITE-ProRule" id="PRU00968"/>
    </source>
</evidence>
<protein>
    <recommendedName>
        <fullName>Cytochrome b</fullName>
    </recommendedName>
    <alternativeName>
        <fullName>Complex III subunit 3</fullName>
    </alternativeName>
    <alternativeName>
        <fullName>Complex III subunit III</fullName>
    </alternativeName>
    <alternativeName>
        <fullName>Cytochrome b-c1 complex subunit 3</fullName>
    </alternativeName>
    <alternativeName>
        <fullName>Ubiquinol-cytochrome-c reductase complex cytochrome b subunit</fullName>
    </alternativeName>
</protein>
<organism>
    <name type="scientific">Ningaui ridei</name>
    <name type="common">Wongai ningaui</name>
    <dbReference type="NCBI Taxonomy" id="32553"/>
    <lineage>
        <taxon>Eukaryota</taxon>
        <taxon>Metazoa</taxon>
        <taxon>Chordata</taxon>
        <taxon>Craniata</taxon>
        <taxon>Vertebrata</taxon>
        <taxon>Euteleostomi</taxon>
        <taxon>Mammalia</taxon>
        <taxon>Metatheria</taxon>
        <taxon>Dasyuromorphia</taxon>
        <taxon>Dasyuridae</taxon>
        <taxon>Ningaui</taxon>
    </lineage>
</organism>
<reference key="1">
    <citation type="journal article" date="1994" name="J. Mammal. Evol.">
        <title>Phylogenetic structure of the marsupial family Dasyuridae based on cytochrome-b DNA sequences.</title>
        <authorList>
            <person name="Krajewski C."/>
            <person name="Painter J."/>
            <person name="Buckley L."/>
            <person name="Westerman M."/>
        </authorList>
    </citation>
    <scope>NUCLEOTIDE SEQUENCE [GENOMIC DNA]</scope>
</reference>
<proteinExistence type="inferred from homology"/>